<feature type="chain" id="PRO_0000315631" description="RNA polymerase-associated protein C651.09c">
    <location>
        <begin position="1"/>
        <end position="560"/>
    </location>
</feature>
<feature type="domain" description="Plus3" evidence="3">
    <location>
        <begin position="214"/>
        <end position="345"/>
    </location>
</feature>
<feature type="region of interest" description="Disordered" evidence="4">
    <location>
        <begin position="15"/>
        <end position="74"/>
    </location>
</feature>
<feature type="region of interest" description="Disordered" evidence="4">
    <location>
        <begin position="128"/>
        <end position="207"/>
    </location>
</feature>
<feature type="region of interest" description="Disordered" evidence="4">
    <location>
        <begin position="440"/>
        <end position="486"/>
    </location>
</feature>
<feature type="coiled-coil region" evidence="2">
    <location>
        <begin position="387"/>
        <end position="456"/>
    </location>
</feature>
<feature type="compositionally biased region" description="Basic and acidic residues" evidence="4">
    <location>
        <begin position="148"/>
        <end position="171"/>
    </location>
</feature>
<feature type="compositionally biased region" description="Acidic residues" evidence="4">
    <location>
        <begin position="180"/>
        <end position="195"/>
    </location>
</feature>
<feature type="compositionally biased region" description="Basic and acidic residues" evidence="4">
    <location>
        <begin position="440"/>
        <end position="449"/>
    </location>
</feature>
<feature type="compositionally biased region" description="Low complexity" evidence="4">
    <location>
        <begin position="451"/>
        <end position="480"/>
    </location>
</feature>
<feature type="modified residue" description="Phosphoserine" evidence="6">
    <location>
        <position position="197"/>
    </location>
</feature>
<feature type="modified residue" description="Phosphoserine" evidence="6">
    <location>
        <position position="502"/>
    </location>
</feature>
<feature type="modified residue" description="Phosphoserine" evidence="6">
    <location>
        <position position="506"/>
    </location>
</feature>
<evidence type="ECO:0000250" key="1"/>
<evidence type="ECO:0000255" key="2"/>
<evidence type="ECO:0000255" key="3">
    <source>
        <dbReference type="PROSITE-ProRule" id="PRU00693"/>
    </source>
</evidence>
<evidence type="ECO:0000256" key="4">
    <source>
        <dbReference type="SAM" id="MobiDB-lite"/>
    </source>
</evidence>
<evidence type="ECO:0000269" key="5">
    <source>
    </source>
</evidence>
<evidence type="ECO:0000269" key="6">
    <source>
    </source>
</evidence>
<proteinExistence type="evidence at protein level"/>
<gene>
    <name type="ORF">SPBC651.09c</name>
</gene>
<protein>
    <recommendedName>
        <fullName>RNA polymerase-associated protein C651.09c</fullName>
    </recommendedName>
    <alternativeName>
        <fullName>Protein RTF1 homolog</fullName>
    </alternativeName>
</protein>
<name>RTF1_SCHPO</name>
<sequence length="560" mass="63680">MADFQDELLALAGIDDSDVASNRKRAHDDLDDVLSSSSDEDNNENVGQDYAEESGGEGNEKSEDEFEEKFKNPYRLEGKFKDEADRAKIMAMTEIERESILFEREEEISKLMERRELAIRLHQQNAQYMAQSTRRSTRDKPLTSAAAGKRDKLTELKKRRQERSARSVSERTRKRSPVSDYEEQNESEKSEEEEGYSPSYAEEKVEQVSKDNASANLYDLNAIRLGRKHVAEYMYHPIFESTVTGCFVRVKIGERDGQGVYRLCQVKGILESRKPYRVDGVLTKVSLECFHGRSKRVFDVNVLSNEPFSDHDFQRWHHQMMEDKLSMPSKNFVQRKLNDLRDMSKYVLSEKEVSDIINRKKELSRVPSNIAAEKTRLRQRRQAAYVAGNAELVKEIDDQLNTLEELSMGSNQNSNSAMDQLAKVNERNRRRNHTEIRLAEQRMNEERRRLSAAATATPMSAPTSVLTGTSPQPSPSLSTSIMSTPKLNPSESVVVASEKASSPDLSPKLLPSESQIFDEGIAVTQTPNTLEDKDFKLHEKAVHGIDDIIATVDFGIDINI</sequence>
<reference key="1">
    <citation type="journal article" date="2002" name="Nature">
        <title>The genome sequence of Schizosaccharomyces pombe.</title>
        <authorList>
            <person name="Wood V."/>
            <person name="Gwilliam R."/>
            <person name="Rajandream M.A."/>
            <person name="Lyne M.H."/>
            <person name="Lyne R."/>
            <person name="Stewart A."/>
            <person name="Sgouros J.G."/>
            <person name="Peat N."/>
            <person name="Hayles J."/>
            <person name="Baker S.G."/>
            <person name="Basham D."/>
            <person name="Bowman S."/>
            <person name="Brooks K."/>
            <person name="Brown D."/>
            <person name="Brown S."/>
            <person name="Chillingworth T."/>
            <person name="Churcher C.M."/>
            <person name="Collins M."/>
            <person name="Connor R."/>
            <person name="Cronin A."/>
            <person name="Davis P."/>
            <person name="Feltwell T."/>
            <person name="Fraser A."/>
            <person name="Gentles S."/>
            <person name="Goble A."/>
            <person name="Hamlin N."/>
            <person name="Harris D.E."/>
            <person name="Hidalgo J."/>
            <person name="Hodgson G."/>
            <person name="Holroyd S."/>
            <person name="Hornsby T."/>
            <person name="Howarth S."/>
            <person name="Huckle E.J."/>
            <person name="Hunt S."/>
            <person name="Jagels K."/>
            <person name="James K.D."/>
            <person name="Jones L."/>
            <person name="Jones M."/>
            <person name="Leather S."/>
            <person name="McDonald S."/>
            <person name="McLean J."/>
            <person name="Mooney P."/>
            <person name="Moule S."/>
            <person name="Mungall K.L."/>
            <person name="Murphy L.D."/>
            <person name="Niblett D."/>
            <person name="Odell C."/>
            <person name="Oliver K."/>
            <person name="O'Neil S."/>
            <person name="Pearson D."/>
            <person name="Quail M.A."/>
            <person name="Rabbinowitsch E."/>
            <person name="Rutherford K.M."/>
            <person name="Rutter S."/>
            <person name="Saunders D."/>
            <person name="Seeger K."/>
            <person name="Sharp S."/>
            <person name="Skelton J."/>
            <person name="Simmonds M.N."/>
            <person name="Squares R."/>
            <person name="Squares S."/>
            <person name="Stevens K."/>
            <person name="Taylor K."/>
            <person name="Taylor R.G."/>
            <person name="Tivey A."/>
            <person name="Walsh S.V."/>
            <person name="Warren T."/>
            <person name="Whitehead S."/>
            <person name="Woodward J.R."/>
            <person name="Volckaert G."/>
            <person name="Aert R."/>
            <person name="Robben J."/>
            <person name="Grymonprez B."/>
            <person name="Weltjens I."/>
            <person name="Vanstreels E."/>
            <person name="Rieger M."/>
            <person name="Schaefer M."/>
            <person name="Mueller-Auer S."/>
            <person name="Gabel C."/>
            <person name="Fuchs M."/>
            <person name="Duesterhoeft A."/>
            <person name="Fritzc C."/>
            <person name="Holzer E."/>
            <person name="Moestl D."/>
            <person name="Hilbert H."/>
            <person name="Borzym K."/>
            <person name="Langer I."/>
            <person name="Beck A."/>
            <person name="Lehrach H."/>
            <person name="Reinhardt R."/>
            <person name="Pohl T.M."/>
            <person name="Eger P."/>
            <person name="Zimmermann W."/>
            <person name="Wedler H."/>
            <person name="Wambutt R."/>
            <person name="Purnelle B."/>
            <person name="Goffeau A."/>
            <person name="Cadieu E."/>
            <person name="Dreano S."/>
            <person name="Gloux S."/>
            <person name="Lelaure V."/>
            <person name="Mottier S."/>
            <person name="Galibert F."/>
            <person name="Aves S.J."/>
            <person name="Xiang Z."/>
            <person name="Hunt C."/>
            <person name="Moore K."/>
            <person name="Hurst S.M."/>
            <person name="Lucas M."/>
            <person name="Rochet M."/>
            <person name="Gaillardin C."/>
            <person name="Tallada V.A."/>
            <person name="Garzon A."/>
            <person name="Thode G."/>
            <person name="Daga R.R."/>
            <person name="Cruzado L."/>
            <person name="Jimenez J."/>
            <person name="Sanchez M."/>
            <person name="del Rey F."/>
            <person name="Benito J."/>
            <person name="Dominguez A."/>
            <person name="Revuelta J.L."/>
            <person name="Moreno S."/>
            <person name="Armstrong J."/>
            <person name="Forsburg S.L."/>
            <person name="Cerutti L."/>
            <person name="Lowe T."/>
            <person name="McCombie W.R."/>
            <person name="Paulsen I."/>
            <person name="Potashkin J."/>
            <person name="Shpakovski G.V."/>
            <person name="Ussery D."/>
            <person name="Barrell B.G."/>
            <person name="Nurse P."/>
        </authorList>
    </citation>
    <scope>NUCLEOTIDE SEQUENCE [LARGE SCALE GENOMIC DNA]</scope>
    <source>
        <strain>972 / ATCC 24843</strain>
    </source>
</reference>
<reference key="2">
    <citation type="journal article" date="2006" name="Nat. Biotechnol.">
        <title>ORFeome cloning and global analysis of protein localization in the fission yeast Schizosaccharomyces pombe.</title>
        <authorList>
            <person name="Matsuyama A."/>
            <person name="Arai R."/>
            <person name="Yashiroda Y."/>
            <person name="Shirai A."/>
            <person name="Kamata A."/>
            <person name="Sekido S."/>
            <person name="Kobayashi Y."/>
            <person name="Hashimoto A."/>
            <person name="Hamamoto M."/>
            <person name="Hiraoka Y."/>
            <person name="Horinouchi S."/>
            <person name="Yoshida M."/>
        </authorList>
    </citation>
    <scope>SUBCELLULAR LOCATION [LARGE SCALE ANALYSIS]</scope>
</reference>
<reference key="3">
    <citation type="journal article" date="2008" name="J. Proteome Res.">
        <title>Phosphoproteome analysis of fission yeast.</title>
        <authorList>
            <person name="Wilson-Grady J.T."/>
            <person name="Villen J."/>
            <person name="Gygi S.P."/>
        </authorList>
    </citation>
    <scope>PHOSPHORYLATION [LARGE SCALE ANALYSIS] AT SER-197; SER-502 AND SER-506</scope>
    <scope>IDENTIFICATION BY MASS SPECTROMETRY</scope>
</reference>
<keyword id="KW-0010">Activator</keyword>
<keyword id="KW-0175">Coiled coil</keyword>
<keyword id="KW-0539">Nucleus</keyword>
<keyword id="KW-0597">Phosphoprotein</keyword>
<keyword id="KW-1185">Reference proteome</keyword>
<keyword id="KW-0804">Transcription</keyword>
<keyword id="KW-0805">Transcription regulation</keyword>
<organism>
    <name type="scientific">Schizosaccharomyces pombe (strain 972 / ATCC 24843)</name>
    <name type="common">Fission yeast</name>
    <dbReference type="NCBI Taxonomy" id="284812"/>
    <lineage>
        <taxon>Eukaryota</taxon>
        <taxon>Fungi</taxon>
        <taxon>Dikarya</taxon>
        <taxon>Ascomycota</taxon>
        <taxon>Taphrinomycotina</taxon>
        <taxon>Schizosaccharomycetes</taxon>
        <taxon>Schizosaccharomycetales</taxon>
        <taxon>Schizosaccharomycetaceae</taxon>
        <taxon>Schizosaccharomyces</taxon>
    </lineage>
</organism>
<dbReference type="EMBL" id="CU329671">
    <property type="protein sequence ID" value="CAB37605.1"/>
    <property type="molecule type" value="Genomic_DNA"/>
</dbReference>
<dbReference type="PIR" id="T40608">
    <property type="entry name" value="T40608"/>
</dbReference>
<dbReference type="SMR" id="O94667"/>
<dbReference type="BioGRID" id="277638">
    <property type="interactions" value="17"/>
</dbReference>
<dbReference type="FunCoup" id="O94667">
    <property type="interactions" value="779"/>
</dbReference>
<dbReference type="STRING" id="284812.O94667"/>
<dbReference type="iPTMnet" id="O94667"/>
<dbReference type="PaxDb" id="4896-SPBC651.09c.1"/>
<dbReference type="EnsemblFungi" id="SPBC651.09c.1">
    <property type="protein sequence ID" value="SPBC651.09c.1:pep"/>
    <property type="gene ID" value="SPBC651.09c"/>
</dbReference>
<dbReference type="KEGG" id="spo:2541123"/>
<dbReference type="PomBase" id="SPBC651.09c"/>
<dbReference type="VEuPathDB" id="FungiDB:SPBC651.09c"/>
<dbReference type="eggNOG" id="KOG2402">
    <property type="taxonomic scope" value="Eukaryota"/>
</dbReference>
<dbReference type="HOGENOM" id="CLU_036626_0_0_1"/>
<dbReference type="InParanoid" id="O94667"/>
<dbReference type="OMA" id="ISGCYAR"/>
<dbReference type="PhylomeDB" id="O94667"/>
<dbReference type="PRO" id="PR:O94667"/>
<dbReference type="Proteomes" id="UP000002485">
    <property type="component" value="Chromosome II"/>
</dbReference>
<dbReference type="GO" id="GO:0016593">
    <property type="term" value="C:Cdc73/Paf1 complex"/>
    <property type="evidence" value="ECO:0000318"/>
    <property type="project" value="GO_Central"/>
</dbReference>
<dbReference type="GO" id="GO:0005634">
    <property type="term" value="C:nucleus"/>
    <property type="evidence" value="ECO:0007005"/>
    <property type="project" value="PomBase"/>
</dbReference>
<dbReference type="GO" id="GO:0000405">
    <property type="term" value="F:bubble DNA binding"/>
    <property type="evidence" value="ECO:0000314"/>
    <property type="project" value="PomBase"/>
</dbReference>
<dbReference type="GO" id="GO:0003723">
    <property type="term" value="F:RNA binding"/>
    <property type="evidence" value="ECO:0000353"/>
    <property type="project" value="PomBase"/>
</dbReference>
<dbReference type="GO" id="GO:1990269">
    <property type="term" value="F:RNA polymerase II C-terminal domain phosphoserine binding"/>
    <property type="evidence" value="ECO:0000318"/>
    <property type="project" value="GO_Central"/>
</dbReference>
<dbReference type="GO" id="GO:0003697">
    <property type="term" value="F:single-stranded DNA binding"/>
    <property type="evidence" value="ECO:0000314"/>
    <property type="project" value="PomBase"/>
</dbReference>
<dbReference type="GO" id="GO:0006368">
    <property type="term" value="P:transcription elongation by RNA polymerase II"/>
    <property type="evidence" value="ECO:0000266"/>
    <property type="project" value="PomBase"/>
</dbReference>
<dbReference type="Gene3D" id="3.90.70.200">
    <property type="entry name" value="Plus-3 domain"/>
    <property type="match status" value="1"/>
</dbReference>
<dbReference type="InterPro" id="IPR004343">
    <property type="entry name" value="Plus-3_dom"/>
</dbReference>
<dbReference type="InterPro" id="IPR036128">
    <property type="entry name" value="Plus3-like_sf"/>
</dbReference>
<dbReference type="PANTHER" id="PTHR13115">
    <property type="entry name" value="RNA POLYMERASE-ASSOCIATED PROTEIN RTF1 HOMOLOG"/>
    <property type="match status" value="1"/>
</dbReference>
<dbReference type="PANTHER" id="PTHR13115:SF8">
    <property type="entry name" value="RNA POLYMERASE-ASSOCIATED PROTEIN RTF1 HOMOLOG"/>
    <property type="match status" value="1"/>
</dbReference>
<dbReference type="Pfam" id="PF03126">
    <property type="entry name" value="Plus-3"/>
    <property type="match status" value="1"/>
</dbReference>
<dbReference type="SMART" id="SM00719">
    <property type="entry name" value="Plus3"/>
    <property type="match status" value="1"/>
</dbReference>
<dbReference type="SUPFAM" id="SSF159042">
    <property type="entry name" value="Plus3-like"/>
    <property type="match status" value="1"/>
</dbReference>
<dbReference type="PROSITE" id="PS51360">
    <property type="entry name" value="PLUS3"/>
    <property type="match status" value="1"/>
</dbReference>
<accession>O94667</accession>
<comment type="function">
    <text evidence="1">The PAF1 complex is a multifunctional complex. Involved in transcription initiation via genetic interactions with TATA-binding proteins. Involved in elongation. Also has a role in transcription-coupled histone modification. Important for TATA site selection by TBP. Directly or indirectly regulates the DNA-binding properties of the TATA box-binding protein, and the relative activities of different TATA elements (By similarity).</text>
</comment>
<comment type="subunit">
    <text evidence="1">Component of the PAF1 complex.</text>
</comment>
<comment type="subcellular location">
    <subcellularLocation>
        <location evidence="5">Nucleus</location>
        <location evidence="5">Nucleoplasm</location>
    </subcellularLocation>
</comment>